<sequence>MNTWKEAIGQEKQQPYFQHILQQVQQARQSGRTIYPPQEEVFSAFRLTEFDQVRVVILGQDPYHGVNQAHGLAFSVKPGIAPPPSLVNIYKELSTDIMGFQTPSHGYLVGWAKQGVLLLNTVLTVEQGLAHSHANFGWETFTDRVIHVLNEQRDHLVFLLWGSHAQKKGQFIDRTKHCVLTSPHPSPLSAHRGFFGCRHFSKTNQYLRHHNLTEINWQLPMTI</sequence>
<dbReference type="EC" id="3.2.2.27" evidence="1"/>
<dbReference type="EMBL" id="CP000947">
    <property type="protein sequence ID" value="ACA31574.1"/>
    <property type="molecule type" value="Genomic_DNA"/>
</dbReference>
<dbReference type="RefSeq" id="WP_011608638.1">
    <property type="nucleotide sequence ID" value="NC_010519.1"/>
</dbReference>
<dbReference type="SMR" id="B0UWA7"/>
<dbReference type="STRING" id="228400.HSM_1790"/>
<dbReference type="GeneID" id="31488097"/>
<dbReference type="KEGG" id="hsm:HSM_1790"/>
<dbReference type="HOGENOM" id="CLU_032162_3_0_6"/>
<dbReference type="GO" id="GO:0005737">
    <property type="term" value="C:cytoplasm"/>
    <property type="evidence" value="ECO:0007669"/>
    <property type="project" value="UniProtKB-SubCell"/>
</dbReference>
<dbReference type="GO" id="GO:0004844">
    <property type="term" value="F:uracil DNA N-glycosylase activity"/>
    <property type="evidence" value="ECO:0007669"/>
    <property type="project" value="UniProtKB-UniRule"/>
</dbReference>
<dbReference type="GO" id="GO:0097510">
    <property type="term" value="P:base-excision repair, AP site formation via deaminated base removal"/>
    <property type="evidence" value="ECO:0007669"/>
    <property type="project" value="TreeGrafter"/>
</dbReference>
<dbReference type="CDD" id="cd10027">
    <property type="entry name" value="UDG-F1-like"/>
    <property type="match status" value="1"/>
</dbReference>
<dbReference type="FunFam" id="3.40.470.10:FF:000001">
    <property type="entry name" value="Uracil-DNA glycosylase"/>
    <property type="match status" value="1"/>
</dbReference>
<dbReference type="Gene3D" id="3.40.470.10">
    <property type="entry name" value="Uracil-DNA glycosylase-like domain"/>
    <property type="match status" value="1"/>
</dbReference>
<dbReference type="HAMAP" id="MF_00148">
    <property type="entry name" value="UDG"/>
    <property type="match status" value="1"/>
</dbReference>
<dbReference type="InterPro" id="IPR002043">
    <property type="entry name" value="UDG_fam1"/>
</dbReference>
<dbReference type="InterPro" id="IPR018085">
    <property type="entry name" value="Ura-DNA_Glyclase_AS"/>
</dbReference>
<dbReference type="InterPro" id="IPR005122">
    <property type="entry name" value="Uracil-DNA_glycosylase-like"/>
</dbReference>
<dbReference type="InterPro" id="IPR036895">
    <property type="entry name" value="Uracil-DNA_glycosylase-like_sf"/>
</dbReference>
<dbReference type="NCBIfam" id="NF003588">
    <property type="entry name" value="PRK05254.1-1"/>
    <property type="match status" value="1"/>
</dbReference>
<dbReference type="NCBIfam" id="NF003589">
    <property type="entry name" value="PRK05254.1-2"/>
    <property type="match status" value="1"/>
</dbReference>
<dbReference type="NCBIfam" id="NF003591">
    <property type="entry name" value="PRK05254.1-4"/>
    <property type="match status" value="1"/>
</dbReference>
<dbReference type="NCBIfam" id="NF003592">
    <property type="entry name" value="PRK05254.1-5"/>
    <property type="match status" value="1"/>
</dbReference>
<dbReference type="NCBIfam" id="TIGR00628">
    <property type="entry name" value="ung"/>
    <property type="match status" value="1"/>
</dbReference>
<dbReference type="PANTHER" id="PTHR11264">
    <property type="entry name" value="URACIL-DNA GLYCOSYLASE"/>
    <property type="match status" value="1"/>
</dbReference>
<dbReference type="PANTHER" id="PTHR11264:SF0">
    <property type="entry name" value="URACIL-DNA GLYCOSYLASE"/>
    <property type="match status" value="1"/>
</dbReference>
<dbReference type="Pfam" id="PF03167">
    <property type="entry name" value="UDG"/>
    <property type="match status" value="1"/>
</dbReference>
<dbReference type="SMART" id="SM00986">
    <property type="entry name" value="UDG"/>
    <property type="match status" value="1"/>
</dbReference>
<dbReference type="SMART" id="SM00987">
    <property type="entry name" value="UreE_C"/>
    <property type="match status" value="1"/>
</dbReference>
<dbReference type="SUPFAM" id="SSF52141">
    <property type="entry name" value="Uracil-DNA glycosylase-like"/>
    <property type="match status" value="1"/>
</dbReference>
<dbReference type="PROSITE" id="PS00130">
    <property type="entry name" value="U_DNA_GLYCOSYLASE"/>
    <property type="match status" value="1"/>
</dbReference>
<feature type="chain" id="PRO_1000076674" description="Uracil-DNA glycosylase">
    <location>
        <begin position="1"/>
        <end position="223"/>
    </location>
</feature>
<feature type="active site" description="Proton acceptor" evidence="1">
    <location>
        <position position="61"/>
    </location>
</feature>
<proteinExistence type="inferred from homology"/>
<gene>
    <name evidence="1" type="primary">ung</name>
    <name type="ordered locus">HSM_1790</name>
</gene>
<comment type="function">
    <text evidence="1">Excises uracil residues from the DNA which can arise as a result of misincorporation of dUMP residues by DNA polymerase or due to deamination of cytosine.</text>
</comment>
<comment type="catalytic activity">
    <reaction evidence="1">
        <text>Hydrolyzes single-stranded DNA or mismatched double-stranded DNA and polynucleotides, releasing free uracil.</text>
        <dbReference type="EC" id="3.2.2.27"/>
    </reaction>
</comment>
<comment type="subcellular location">
    <subcellularLocation>
        <location evidence="1">Cytoplasm</location>
    </subcellularLocation>
</comment>
<comment type="similarity">
    <text evidence="1">Belongs to the uracil-DNA glycosylase (UDG) superfamily. UNG family.</text>
</comment>
<reference key="1">
    <citation type="submission" date="2008-02" db="EMBL/GenBank/DDBJ databases">
        <title>Complete sequence of Haemophilus somnus 2336.</title>
        <authorList>
            <consortium name="US DOE Joint Genome Institute"/>
            <person name="Siddaramappa S."/>
            <person name="Duncan A.J."/>
            <person name="Challacombe J.F."/>
            <person name="Rainey D."/>
            <person name="Gillaspy A.F."/>
            <person name="Carson M."/>
            <person name="Gipson J."/>
            <person name="Gipson M."/>
            <person name="Bruce D."/>
            <person name="Detter J.C."/>
            <person name="Han C.S."/>
            <person name="Land M."/>
            <person name="Tapia R."/>
            <person name="Thompson L.S."/>
            <person name="Orvis J."/>
            <person name="Zaitshik J."/>
            <person name="Barnes G."/>
            <person name="Brettin T.S."/>
            <person name="Dyer D.W."/>
            <person name="Inzana T.J."/>
        </authorList>
    </citation>
    <scope>NUCLEOTIDE SEQUENCE [LARGE SCALE GENOMIC DNA]</scope>
    <source>
        <strain>2336</strain>
    </source>
</reference>
<organism>
    <name type="scientific">Histophilus somni (strain 2336)</name>
    <name type="common">Haemophilus somnus</name>
    <dbReference type="NCBI Taxonomy" id="228400"/>
    <lineage>
        <taxon>Bacteria</taxon>
        <taxon>Pseudomonadati</taxon>
        <taxon>Pseudomonadota</taxon>
        <taxon>Gammaproteobacteria</taxon>
        <taxon>Pasteurellales</taxon>
        <taxon>Pasteurellaceae</taxon>
        <taxon>Histophilus</taxon>
    </lineage>
</organism>
<keyword id="KW-0963">Cytoplasm</keyword>
<keyword id="KW-0227">DNA damage</keyword>
<keyword id="KW-0234">DNA repair</keyword>
<keyword id="KW-0378">Hydrolase</keyword>
<protein>
    <recommendedName>
        <fullName evidence="1">Uracil-DNA glycosylase</fullName>
        <shortName evidence="1">UDG</shortName>
        <ecNumber evidence="1">3.2.2.27</ecNumber>
    </recommendedName>
</protein>
<name>UNG_HISS2</name>
<evidence type="ECO:0000255" key="1">
    <source>
        <dbReference type="HAMAP-Rule" id="MF_00148"/>
    </source>
</evidence>
<accession>B0UWA7</accession>